<keyword id="KW-0235">DNA replication</keyword>
<keyword id="KW-0240">DNA-directed RNA polymerase</keyword>
<keyword id="KW-0271">Exosome</keyword>
<keyword id="KW-0460">Magnesium</keyword>
<keyword id="KW-0479">Metal-binding</keyword>
<keyword id="KW-0548">Nucleotidyltransferase</keyword>
<keyword id="KW-0639">Primosome</keyword>
<keyword id="KW-1185">Reference proteome</keyword>
<keyword id="KW-0804">Transcription</keyword>
<keyword id="KW-0808">Transferase</keyword>
<sequence length="419" mass="46864">MKYLIRARLEVDGRVEKHDVIGAIFGQTESLLGSDFSLEELQNKDKLGRIHVELKYQGTKTIGSISVPSNLSRVETAIIAAMLETIDKIGPYPAKITIEEIRDLRLERLEKIKQRARELLRLMKEKEPDIREIIREVLQEEQAKAQVAKLVEYGPERLPAGPGVEKADTIIVVEGRSDVNTLLRYGYTNVIALGGAREKVPETIKRLAEQKKVILFVDGDRGGELILKNVLPQMKVDYVARAPEGREVESLTGREIAQALSQMKPAEIVARELGIEAAEKPAEEAVKREEEAAAEAKPPAPAVQEKAAKPPEEKPPTVKFTIPKAVLEAAKELRGTLEAIVYDKEWRELDRLKVRELYDYISKSEPGRIYAVVFDGIITQRLLDIASEKGVGIIIGNRIGNKITHKPTNVKFLTFSDLF</sequence>
<accession>Q9YA42</accession>
<feature type="chain" id="PRO_0000144123" description="DNA primase DnaG">
    <location>
        <begin position="1"/>
        <end position="419"/>
    </location>
</feature>
<feature type="domain" description="Toprim" evidence="1">
    <location>
        <begin position="168"/>
        <end position="244"/>
    </location>
</feature>
<feature type="region of interest" description="Disordered" evidence="2">
    <location>
        <begin position="280"/>
        <end position="317"/>
    </location>
</feature>
<feature type="compositionally biased region" description="Basic and acidic residues" evidence="2">
    <location>
        <begin position="280"/>
        <end position="291"/>
    </location>
</feature>
<feature type="compositionally biased region" description="Basic and acidic residues" evidence="2">
    <location>
        <begin position="306"/>
        <end position="316"/>
    </location>
</feature>
<feature type="binding site" evidence="1">
    <location>
        <position position="174"/>
    </location>
    <ligand>
        <name>Mg(2+)</name>
        <dbReference type="ChEBI" id="CHEBI:18420"/>
        <label>1</label>
        <note>catalytic</note>
    </ligand>
</feature>
<feature type="binding site" evidence="1">
    <location>
        <position position="218"/>
    </location>
    <ligand>
        <name>Mg(2+)</name>
        <dbReference type="ChEBI" id="CHEBI:18420"/>
        <label>1</label>
        <note>catalytic</note>
    </ligand>
</feature>
<feature type="binding site" evidence="1">
    <location>
        <position position="218"/>
    </location>
    <ligand>
        <name>Mg(2+)</name>
        <dbReference type="ChEBI" id="CHEBI:18420"/>
        <label>2</label>
    </ligand>
</feature>
<feature type="binding site" evidence="1">
    <location>
        <position position="220"/>
    </location>
    <ligand>
        <name>Mg(2+)</name>
        <dbReference type="ChEBI" id="CHEBI:18420"/>
        <label>2</label>
    </ligand>
</feature>
<protein>
    <recommendedName>
        <fullName evidence="1">DNA primase DnaG</fullName>
        <ecNumber evidence="1">2.7.7.101</ecNumber>
    </recommendedName>
</protein>
<gene>
    <name evidence="1" type="primary">dnaG</name>
    <name type="ordered locus">APE_2096.1</name>
</gene>
<reference key="1">
    <citation type="journal article" date="1999" name="DNA Res.">
        <title>Complete genome sequence of an aerobic hyper-thermophilic crenarchaeon, Aeropyrum pernix K1.</title>
        <authorList>
            <person name="Kawarabayasi Y."/>
            <person name="Hino Y."/>
            <person name="Horikawa H."/>
            <person name="Yamazaki S."/>
            <person name="Haikawa Y."/>
            <person name="Jin-no K."/>
            <person name="Takahashi M."/>
            <person name="Sekine M."/>
            <person name="Baba S."/>
            <person name="Ankai A."/>
            <person name="Kosugi H."/>
            <person name="Hosoyama A."/>
            <person name="Fukui S."/>
            <person name="Nagai Y."/>
            <person name="Nishijima K."/>
            <person name="Nakazawa H."/>
            <person name="Takamiya M."/>
            <person name="Masuda S."/>
            <person name="Funahashi T."/>
            <person name="Tanaka T."/>
            <person name="Kudoh Y."/>
            <person name="Yamazaki J."/>
            <person name="Kushida N."/>
            <person name="Oguchi A."/>
            <person name="Aoki K."/>
            <person name="Kubota K."/>
            <person name="Nakamura Y."/>
            <person name="Nomura N."/>
            <person name="Sako Y."/>
            <person name="Kikuchi H."/>
        </authorList>
    </citation>
    <scope>NUCLEOTIDE SEQUENCE [LARGE SCALE GENOMIC DNA]</scope>
    <source>
        <strain>ATCC 700893 / DSM 11879 / JCM 9820 / NBRC 100138 / K1</strain>
    </source>
</reference>
<dbReference type="EC" id="2.7.7.101" evidence="1"/>
<dbReference type="EMBL" id="BA000002">
    <property type="protein sequence ID" value="BAA81107.2"/>
    <property type="molecule type" value="Genomic_DNA"/>
</dbReference>
<dbReference type="PIR" id="C72515">
    <property type="entry name" value="C72515"/>
</dbReference>
<dbReference type="RefSeq" id="WP_010866793.1">
    <property type="nucleotide sequence ID" value="NC_000854.2"/>
</dbReference>
<dbReference type="SMR" id="Q9YA42"/>
<dbReference type="STRING" id="272557.APE_2096.1"/>
<dbReference type="EnsemblBacteria" id="BAA81107">
    <property type="protein sequence ID" value="BAA81107"/>
    <property type="gene ID" value="APE_2096.1"/>
</dbReference>
<dbReference type="GeneID" id="1445190"/>
<dbReference type="KEGG" id="ape:APE_2096.1"/>
<dbReference type="PATRIC" id="fig|272557.25.peg.1398"/>
<dbReference type="eggNOG" id="arCOG04281">
    <property type="taxonomic scope" value="Archaea"/>
</dbReference>
<dbReference type="Proteomes" id="UP000002518">
    <property type="component" value="Chromosome"/>
</dbReference>
<dbReference type="GO" id="GO:0005737">
    <property type="term" value="C:cytoplasm"/>
    <property type="evidence" value="ECO:0007669"/>
    <property type="project" value="TreeGrafter"/>
</dbReference>
<dbReference type="GO" id="GO:0000428">
    <property type="term" value="C:DNA-directed RNA polymerase complex"/>
    <property type="evidence" value="ECO:0007669"/>
    <property type="project" value="UniProtKB-KW"/>
</dbReference>
<dbReference type="GO" id="GO:0000178">
    <property type="term" value="C:exosome (RNase complex)"/>
    <property type="evidence" value="ECO:0007669"/>
    <property type="project" value="UniProtKB-KW"/>
</dbReference>
<dbReference type="GO" id="GO:1990077">
    <property type="term" value="C:primosome complex"/>
    <property type="evidence" value="ECO:0007669"/>
    <property type="project" value="UniProtKB-KW"/>
</dbReference>
<dbReference type="GO" id="GO:0003899">
    <property type="term" value="F:DNA-directed RNA polymerase activity"/>
    <property type="evidence" value="ECO:0007669"/>
    <property type="project" value="InterPro"/>
</dbReference>
<dbReference type="GO" id="GO:0046872">
    <property type="term" value="F:metal ion binding"/>
    <property type="evidence" value="ECO:0007669"/>
    <property type="project" value="UniProtKB-KW"/>
</dbReference>
<dbReference type="GO" id="GO:0008143">
    <property type="term" value="F:poly(A) binding"/>
    <property type="evidence" value="ECO:0007669"/>
    <property type="project" value="InterPro"/>
</dbReference>
<dbReference type="GO" id="GO:0006269">
    <property type="term" value="P:DNA replication, synthesis of primer"/>
    <property type="evidence" value="ECO:0007669"/>
    <property type="project" value="UniProtKB-UniRule"/>
</dbReference>
<dbReference type="CDD" id="cd01029">
    <property type="entry name" value="TOPRIM_primases"/>
    <property type="match status" value="1"/>
</dbReference>
<dbReference type="Gene3D" id="3.40.1360.10">
    <property type="match status" value="1"/>
</dbReference>
<dbReference type="HAMAP" id="MF_00007">
    <property type="entry name" value="DNA_primase_DnaG_arc"/>
    <property type="match status" value="1"/>
</dbReference>
<dbReference type="InterPro" id="IPR050219">
    <property type="entry name" value="DnaG_primase"/>
</dbReference>
<dbReference type="InterPro" id="IPR020607">
    <property type="entry name" value="Primase_DnaG_arc"/>
</dbReference>
<dbReference type="InterPro" id="IPR034154">
    <property type="entry name" value="TOPRIM_DnaG/twinkle"/>
</dbReference>
<dbReference type="InterPro" id="IPR006171">
    <property type="entry name" value="TOPRIM_dom"/>
</dbReference>
<dbReference type="NCBIfam" id="NF003108">
    <property type="entry name" value="PRK04031.1-1"/>
    <property type="match status" value="1"/>
</dbReference>
<dbReference type="PANTHER" id="PTHR30313">
    <property type="entry name" value="DNA PRIMASE"/>
    <property type="match status" value="1"/>
</dbReference>
<dbReference type="PANTHER" id="PTHR30313:SF2">
    <property type="entry name" value="DNA PRIMASE"/>
    <property type="match status" value="1"/>
</dbReference>
<dbReference type="Pfam" id="PF01751">
    <property type="entry name" value="Toprim"/>
    <property type="match status" value="1"/>
</dbReference>
<dbReference type="SMART" id="SM00493">
    <property type="entry name" value="TOPRIM"/>
    <property type="match status" value="1"/>
</dbReference>
<dbReference type="SUPFAM" id="SSF110455">
    <property type="entry name" value="Toprim domain"/>
    <property type="match status" value="1"/>
</dbReference>
<dbReference type="PROSITE" id="PS50880">
    <property type="entry name" value="TOPRIM"/>
    <property type="match status" value="1"/>
</dbReference>
<proteinExistence type="inferred from homology"/>
<organism>
    <name type="scientific">Aeropyrum pernix (strain ATCC 700893 / DSM 11879 / JCM 9820 / NBRC 100138 / K1)</name>
    <dbReference type="NCBI Taxonomy" id="272557"/>
    <lineage>
        <taxon>Archaea</taxon>
        <taxon>Thermoproteota</taxon>
        <taxon>Thermoprotei</taxon>
        <taxon>Desulfurococcales</taxon>
        <taxon>Desulfurococcaceae</taxon>
        <taxon>Aeropyrum</taxon>
    </lineage>
</organism>
<evidence type="ECO:0000255" key="1">
    <source>
        <dbReference type="HAMAP-Rule" id="MF_00007"/>
    </source>
</evidence>
<evidence type="ECO:0000256" key="2">
    <source>
        <dbReference type="SAM" id="MobiDB-lite"/>
    </source>
</evidence>
<name>DNAG_AERPE</name>
<comment type="function">
    <text evidence="1">RNA polymerase that catalyzes the synthesis of short RNA molecules used as primers for DNA polymerase during DNA replication. Also part of the exosome, which is a complex involved in RNA degradation. Acts as a poly(A)-binding protein that enhances the interaction between heteromeric, adenine-rich transcripts and the exosome.</text>
</comment>
<comment type="catalytic activity">
    <reaction evidence="1">
        <text>ssDNA + n NTP = ssDNA/pppN(pN)n-1 hybrid + (n-1) diphosphate.</text>
        <dbReference type="EC" id="2.7.7.101"/>
    </reaction>
</comment>
<comment type="cofactor">
    <cofactor evidence="1">
        <name>Mg(2+)</name>
        <dbReference type="ChEBI" id="CHEBI:18420"/>
    </cofactor>
    <text evidence="1">Binds two Mg(2+) per subunit.</text>
</comment>
<comment type="subunit">
    <text evidence="1">Forms a ternary complex with MCM helicase and DNA. Component of the archaeal exosome complex.</text>
</comment>
<comment type="similarity">
    <text evidence="1">Belongs to the archaeal DnaG primase family.</text>
</comment>